<evidence type="ECO:0000255" key="1">
    <source>
        <dbReference type="HAMAP-Rule" id="MF_00072"/>
    </source>
</evidence>
<keyword id="KW-0963">Cytoplasm</keyword>
<keyword id="KW-0342">GTP-binding</keyword>
<keyword id="KW-0547">Nucleotide-binding</keyword>
<keyword id="KW-0648">Protein biosynthesis</keyword>
<protein>
    <recommendedName>
        <fullName evidence="1">Peptide chain release factor 3</fullName>
        <shortName evidence="1">RF-3</shortName>
    </recommendedName>
</protein>
<accession>Q5N192</accession>
<gene>
    <name evidence="1" type="primary">prfC</name>
    <name type="ordered locus">syc1738_c</name>
</gene>
<feature type="chain" id="PRO_0000242220" description="Peptide chain release factor 3">
    <location>
        <begin position="1"/>
        <end position="556"/>
    </location>
</feature>
<feature type="domain" description="tr-type G">
    <location>
        <begin position="28"/>
        <end position="297"/>
    </location>
</feature>
<feature type="binding site" evidence="1">
    <location>
        <begin position="37"/>
        <end position="44"/>
    </location>
    <ligand>
        <name>GTP</name>
        <dbReference type="ChEBI" id="CHEBI:37565"/>
    </ligand>
</feature>
<feature type="binding site" evidence="1">
    <location>
        <begin position="105"/>
        <end position="109"/>
    </location>
    <ligand>
        <name>GTP</name>
        <dbReference type="ChEBI" id="CHEBI:37565"/>
    </ligand>
</feature>
<feature type="binding site" evidence="1">
    <location>
        <begin position="159"/>
        <end position="162"/>
    </location>
    <ligand>
        <name>GTP</name>
        <dbReference type="ChEBI" id="CHEBI:37565"/>
    </ligand>
</feature>
<dbReference type="EMBL" id="AP008231">
    <property type="protein sequence ID" value="BAD79928.1"/>
    <property type="molecule type" value="Genomic_DNA"/>
</dbReference>
<dbReference type="RefSeq" id="WP_011244048.1">
    <property type="nucleotide sequence ID" value="NC_006576.1"/>
</dbReference>
<dbReference type="SMR" id="Q5N192"/>
<dbReference type="KEGG" id="syc:syc1738_c"/>
<dbReference type="eggNOG" id="COG4108">
    <property type="taxonomic scope" value="Bacteria"/>
</dbReference>
<dbReference type="Proteomes" id="UP000001175">
    <property type="component" value="Chromosome"/>
</dbReference>
<dbReference type="GO" id="GO:0005829">
    <property type="term" value="C:cytosol"/>
    <property type="evidence" value="ECO:0007669"/>
    <property type="project" value="TreeGrafter"/>
</dbReference>
<dbReference type="GO" id="GO:0005525">
    <property type="term" value="F:GTP binding"/>
    <property type="evidence" value="ECO:0007669"/>
    <property type="project" value="UniProtKB-UniRule"/>
</dbReference>
<dbReference type="GO" id="GO:0003924">
    <property type="term" value="F:GTPase activity"/>
    <property type="evidence" value="ECO:0007669"/>
    <property type="project" value="InterPro"/>
</dbReference>
<dbReference type="GO" id="GO:0016150">
    <property type="term" value="F:translation release factor activity, codon nonspecific"/>
    <property type="evidence" value="ECO:0007669"/>
    <property type="project" value="TreeGrafter"/>
</dbReference>
<dbReference type="GO" id="GO:0016149">
    <property type="term" value="F:translation release factor activity, codon specific"/>
    <property type="evidence" value="ECO:0007669"/>
    <property type="project" value="UniProtKB-UniRule"/>
</dbReference>
<dbReference type="GO" id="GO:0006449">
    <property type="term" value="P:regulation of translational termination"/>
    <property type="evidence" value="ECO:0007669"/>
    <property type="project" value="UniProtKB-UniRule"/>
</dbReference>
<dbReference type="CDD" id="cd04169">
    <property type="entry name" value="RF3"/>
    <property type="match status" value="1"/>
</dbReference>
<dbReference type="CDD" id="cd03689">
    <property type="entry name" value="RF3_II"/>
    <property type="match status" value="1"/>
</dbReference>
<dbReference type="FunFam" id="3.30.70.3280:FF:000001">
    <property type="entry name" value="Peptide chain release factor 3"/>
    <property type="match status" value="1"/>
</dbReference>
<dbReference type="FunFam" id="3.40.50.300:FF:000542">
    <property type="entry name" value="Peptide chain release factor 3"/>
    <property type="match status" value="1"/>
</dbReference>
<dbReference type="Gene3D" id="3.40.50.300">
    <property type="entry name" value="P-loop containing nucleotide triphosphate hydrolases"/>
    <property type="match status" value="1"/>
</dbReference>
<dbReference type="Gene3D" id="3.30.70.3280">
    <property type="entry name" value="Peptide chain release factor 3, domain III"/>
    <property type="match status" value="1"/>
</dbReference>
<dbReference type="Gene3D" id="2.40.30.10">
    <property type="entry name" value="Translation factors"/>
    <property type="match status" value="1"/>
</dbReference>
<dbReference type="HAMAP" id="MF_00072">
    <property type="entry name" value="Rel_fac_3"/>
    <property type="match status" value="1"/>
</dbReference>
<dbReference type="InterPro" id="IPR053905">
    <property type="entry name" value="EF-G-like_DII"/>
</dbReference>
<dbReference type="InterPro" id="IPR035647">
    <property type="entry name" value="EFG_III/V"/>
</dbReference>
<dbReference type="InterPro" id="IPR031157">
    <property type="entry name" value="G_TR_CS"/>
</dbReference>
<dbReference type="InterPro" id="IPR027417">
    <property type="entry name" value="P-loop_NTPase"/>
</dbReference>
<dbReference type="InterPro" id="IPR004548">
    <property type="entry name" value="PrfC"/>
</dbReference>
<dbReference type="InterPro" id="IPR032090">
    <property type="entry name" value="RF3_C"/>
</dbReference>
<dbReference type="InterPro" id="IPR038467">
    <property type="entry name" value="RF3_dom_3_sf"/>
</dbReference>
<dbReference type="InterPro" id="IPR041732">
    <property type="entry name" value="RF3_GTP-bd"/>
</dbReference>
<dbReference type="InterPro" id="IPR005225">
    <property type="entry name" value="Small_GTP-bd"/>
</dbReference>
<dbReference type="InterPro" id="IPR000795">
    <property type="entry name" value="T_Tr_GTP-bd_dom"/>
</dbReference>
<dbReference type="InterPro" id="IPR009000">
    <property type="entry name" value="Transl_B-barrel_sf"/>
</dbReference>
<dbReference type="NCBIfam" id="TIGR00503">
    <property type="entry name" value="prfC"/>
    <property type="match status" value="1"/>
</dbReference>
<dbReference type="NCBIfam" id="NF001964">
    <property type="entry name" value="PRK00741.1"/>
    <property type="match status" value="1"/>
</dbReference>
<dbReference type="NCBIfam" id="TIGR00231">
    <property type="entry name" value="small_GTP"/>
    <property type="match status" value="1"/>
</dbReference>
<dbReference type="PANTHER" id="PTHR43556">
    <property type="entry name" value="PEPTIDE CHAIN RELEASE FACTOR RF3"/>
    <property type="match status" value="1"/>
</dbReference>
<dbReference type="PANTHER" id="PTHR43556:SF2">
    <property type="entry name" value="PEPTIDE CHAIN RELEASE FACTOR RF3"/>
    <property type="match status" value="1"/>
</dbReference>
<dbReference type="Pfam" id="PF22042">
    <property type="entry name" value="EF-G_D2"/>
    <property type="match status" value="1"/>
</dbReference>
<dbReference type="Pfam" id="PF00009">
    <property type="entry name" value="GTP_EFTU"/>
    <property type="match status" value="1"/>
</dbReference>
<dbReference type="Pfam" id="PF16658">
    <property type="entry name" value="RF3_C"/>
    <property type="match status" value="1"/>
</dbReference>
<dbReference type="PRINTS" id="PR00315">
    <property type="entry name" value="ELONGATNFCT"/>
</dbReference>
<dbReference type="SUPFAM" id="SSF54980">
    <property type="entry name" value="EF-G C-terminal domain-like"/>
    <property type="match status" value="1"/>
</dbReference>
<dbReference type="SUPFAM" id="SSF52540">
    <property type="entry name" value="P-loop containing nucleoside triphosphate hydrolases"/>
    <property type="match status" value="1"/>
</dbReference>
<dbReference type="SUPFAM" id="SSF50447">
    <property type="entry name" value="Translation proteins"/>
    <property type="match status" value="1"/>
</dbReference>
<dbReference type="PROSITE" id="PS00301">
    <property type="entry name" value="G_TR_1"/>
    <property type="match status" value="1"/>
</dbReference>
<dbReference type="PROSITE" id="PS51722">
    <property type="entry name" value="G_TR_2"/>
    <property type="match status" value="1"/>
</dbReference>
<organism>
    <name type="scientific">Synechococcus sp. (strain ATCC 27144 / PCC 6301 / SAUG 1402/1)</name>
    <name type="common">Anacystis nidulans</name>
    <dbReference type="NCBI Taxonomy" id="269084"/>
    <lineage>
        <taxon>Bacteria</taxon>
        <taxon>Bacillati</taxon>
        <taxon>Cyanobacteriota</taxon>
        <taxon>Cyanophyceae</taxon>
        <taxon>Synechococcales</taxon>
        <taxon>Synechococcaceae</taxon>
        <taxon>Synechococcus</taxon>
    </lineage>
</organism>
<sequence length="556" mass="63101">MGVHSFLCSSPWFRMVTDLQKEIQEAVQQRRNFAIISHPDAGKTTLTEKLLLYGGAIQEAGAVKAKRSQRAATSDWMELEKQRGISITSTVLQFNYHDCTINLLDTPGHQDFSEDTYRTLAAADNAVMLEDAAKGLEPQTRKLFEVCRMRNIPIFTFFNKMDRPGREPLELLDEIEQELGLQTYAVNWPIGSGDRFRGVFDRRKQQVHLFERSVHGKRQAKDTTLEWGDPQLADLIEPDLLQQLQDELELLEGVGTEFDLEAIHAGQLTPVFWGSAMTNFGVELFLEAFLDYALKPGARRSSVGDMAPDYPEFSGFVFKLQANMDPRHRDRIAFVRVCTGKFEKDMTVQHARSGRTLRLSRPQKLFGQDREVLDDAYPGDMIGLNNPGMFAIGDTIYTGKRLEYDGIPCFSPEIFAYLRNPNPSKFKPFRKGVSELREEGAVQIMYSADSAKRDSILAAVGQLQLEVVQYRLENEYGVETLLEPLPFSVARWVEGGWDVLEKVGRLFNTTTVKDTWGRPVLLFKNEWNLRQIEADHPELQLRSVAPVAAGQKPIEV</sequence>
<proteinExistence type="inferred from homology"/>
<reference key="1">
    <citation type="journal article" date="2007" name="Photosyn. Res.">
        <title>Complete nucleotide sequence of the freshwater unicellular cyanobacterium Synechococcus elongatus PCC 6301 chromosome: gene content and organization.</title>
        <authorList>
            <person name="Sugita C."/>
            <person name="Ogata K."/>
            <person name="Shikata M."/>
            <person name="Jikuya H."/>
            <person name="Takano J."/>
            <person name="Furumichi M."/>
            <person name="Kanehisa M."/>
            <person name="Omata T."/>
            <person name="Sugiura M."/>
            <person name="Sugita M."/>
        </authorList>
    </citation>
    <scope>NUCLEOTIDE SEQUENCE [LARGE SCALE GENOMIC DNA]</scope>
    <source>
        <strain>ATCC 27144 / PCC 6301 / SAUG 1402/1</strain>
    </source>
</reference>
<name>RF3_SYNP6</name>
<comment type="function">
    <text evidence="1">Increases the formation of ribosomal termination complexes and stimulates activities of RF-1 and RF-2. It binds guanine nucleotides and has strong preference for UGA stop codons. It may interact directly with the ribosome. The stimulation of RF-1 and RF-2 is significantly reduced by GTP and GDP, but not by GMP.</text>
</comment>
<comment type="subcellular location">
    <subcellularLocation>
        <location evidence="1">Cytoplasm</location>
    </subcellularLocation>
</comment>
<comment type="similarity">
    <text evidence="1">Belongs to the TRAFAC class translation factor GTPase superfamily. Classic translation factor GTPase family. PrfC subfamily.</text>
</comment>